<accession>Q8ZKP8</accession>
<sequence>MNSQFAGLTREACVALLASYPLSVGILAGQWIALHRYLQQLEALNQPLLHLDLMDGQFCPQFTVGPWAVGQLPQTFIKDVHLMVADQWTAAQACVKAGAHCITLQAEGDIHLHHTLSWLGQQTVPVIGGEMPVIRGISLCPATPLDVIIPILSDVEVIQLLAVNPGYGSKMRSSDLHERVAQLLCLLGDKREGKIIVIDGSLTQDQLPSLIAQGIDRVVSGSALFRDDRLVENTRSWRAMFKVAGDTTFLPSTA</sequence>
<feature type="chain" id="PRO_0000351561" description="Putative epimerase LsrE">
    <location>
        <begin position="1"/>
        <end position="254"/>
    </location>
</feature>
<feature type="transmembrane region" description="Helical" evidence="2">
    <location>
        <begin position="14"/>
        <end position="34"/>
    </location>
</feature>
<feature type="active site" description="Proton acceptor" evidence="1">
    <location>
        <position position="52"/>
    </location>
</feature>
<feature type="active site" description="Proton donor" evidence="1">
    <location>
        <position position="199"/>
    </location>
</feature>
<feature type="binding site" evidence="1">
    <location>
        <position position="50"/>
    </location>
    <ligand>
        <name>a divalent metal cation</name>
        <dbReference type="ChEBI" id="CHEBI:60240"/>
    </ligand>
</feature>
<feature type="binding site" evidence="1">
    <location>
        <position position="52"/>
    </location>
    <ligand>
        <name>a divalent metal cation</name>
        <dbReference type="ChEBI" id="CHEBI:60240"/>
    </ligand>
</feature>
<feature type="binding site" evidence="1">
    <location>
        <position position="81"/>
    </location>
    <ligand>
        <name>a divalent metal cation</name>
        <dbReference type="ChEBI" id="CHEBI:60240"/>
    </ligand>
</feature>
<feature type="binding site" evidence="1">
    <location>
        <position position="81"/>
    </location>
    <ligand>
        <name>substrate</name>
    </ligand>
</feature>
<feature type="binding site" evidence="1">
    <location>
        <begin position="166"/>
        <end position="169"/>
    </location>
    <ligand>
        <name>substrate</name>
    </ligand>
</feature>
<feature type="binding site" evidence="1">
    <location>
        <begin position="199"/>
        <end position="201"/>
    </location>
    <ligand>
        <name>substrate</name>
    </ligand>
</feature>
<feature type="binding site" evidence="1">
    <location>
        <position position="199"/>
    </location>
    <ligand>
        <name>a divalent metal cation</name>
        <dbReference type="ChEBI" id="CHEBI:60240"/>
    </ligand>
</feature>
<feature type="binding site" evidence="1">
    <location>
        <begin position="221"/>
        <end position="222"/>
    </location>
    <ligand>
        <name>substrate</name>
    </ligand>
</feature>
<dbReference type="EC" id="5.1.3.-" evidence="1"/>
<dbReference type="EMBL" id="AE006468">
    <property type="protein sequence ID" value="AAL22920.1"/>
    <property type="molecule type" value="Genomic_DNA"/>
</dbReference>
<dbReference type="RefSeq" id="NP_462961.1">
    <property type="nucleotide sequence ID" value="NC_003197.2"/>
</dbReference>
<dbReference type="RefSeq" id="WP_001088049.1">
    <property type="nucleotide sequence ID" value="NC_003197.2"/>
</dbReference>
<dbReference type="SMR" id="Q8ZKP8"/>
<dbReference type="STRING" id="99287.STM4080"/>
<dbReference type="PaxDb" id="99287-STM4080"/>
<dbReference type="GeneID" id="1255607"/>
<dbReference type="KEGG" id="stm:STM4080"/>
<dbReference type="PATRIC" id="fig|99287.12.peg.4300"/>
<dbReference type="HOGENOM" id="CLU_054856_3_0_6"/>
<dbReference type="OMA" id="FALTIEW"/>
<dbReference type="PhylomeDB" id="Q8ZKP8"/>
<dbReference type="BioCyc" id="SENT99287:STM4080-MONOMER"/>
<dbReference type="Proteomes" id="UP000001014">
    <property type="component" value="Chromosome"/>
</dbReference>
<dbReference type="GO" id="GO:0005829">
    <property type="term" value="C:cytosol"/>
    <property type="evidence" value="ECO:0000318"/>
    <property type="project" value="GO_Central"/>
</dbReference>
<dbReference type="GO" id="GO:0005886">
    <property type="term" value="C:plasma membrane"/>
    <property type="evidence" value="ECO:0007669"/>
    <property type="project" value="UniProtKB-SubCell"/>
</dbReference>
<dbReference type="GO" id="GO:0004750">
    <property type="term" value="F:D-ribulose-phosphate 3-epimerase activity"/>
    <property type="evidence" value="ECO:0000318"/>
    <property type="project" value="GO_Central"/>
</dbReference>
<dbReference type="GO" id="GO:0046872">
    <property type="term" value="F:metal ion binding"/>
    <property type="evidence" value="ECO:0000318"/>
    <property type="project" value="GO_Central"/>
</dbReference>
<dbReference type="GO" id="GO:0005975">
    <property type="term" value="P:carbohydrate metabolic process"/>
    <property type="evidence" value="ECO:0000318"/>
    <property type="project" value="GO_Central"/>
</dbReference>
<dbReference type="GO" id="GO:0009052">
    <property type="term" value="P:pentose-phosphate shunt, non-oxidative branch"/>
    <property type="evidence" value="ECO:0000318"/>
    <property type="project" value="GO_Central"/>
</dbReference>
<dbReference type="CDD" id="cd00429">
    <property type="entry name" value="RPE"/>
    <property type="match status" value="1"/>
</dbReference>
<dbReference type="FunFam" id="3.20.20.70:FF:000180">
    <property type="entry name" value="Epimerase"/>
    <property type="match status" value="1"/>
</dbReference>
<dbReference type="Gene3D" id="3.20.20.70">
    <property type="entry name" value="Aldolase class I"/>
    <property type="match status" value="1"/>
</dbReference>
<dbReference type="InterPro" id="IPR013785">
    <property type="entry name" value="Aldolase_TIM"/>
</dbReference>
<dbReference type="InterPro" id="IPR000056">
    <property type="entry name" value="Ribul_P_3_epim-like"/>
</dbReference>
<dbReference type="InterPro" id="IPR011060">
    <property type="entry name" value="RibuloseP-bd_barrel"/>
</dbReference>
<dbReference type="NCBIfam" id="NF010658">
    <property type="entry name" value="PRK14057.1"/>
    <property type="match status" value="1"/>
</dbReference>
<dbReference type="PANTHER" id="PTHR11749">
    <property type="entry name" value="RIBULOSE-5-PHOSPHATE-3-EPIMERASE"/>
    <property type="match status" value="1"/>
</dbReference>
<dbReference type="Pfam" id="PF00834">
    <property type="entry name" value="Ribul_P_3_epim"/>
    <property type="match status" value="1"/>
</dbReference>
<dbReference type="SUPFAM" id="SSF51366">
    <property type="entry name" value="Ribulose-phoshate binding barrel"/>
    <property type="match status" value="1"/>
</dbReference>
<name>LSRE_SALTY</name>
<evidence type="ECO:0000250" key="1">
    <source>
        <dbReference type="UniProtKB" id="P32719"/>
    </source>
</evidence>
<evidence type="ECO:0000255" key="2"/>
<evidence type="ECO:0000269" key="3">
    <source>
    </source>
</evidence>
<evidence type="ECO:0000269" key="4">
    <source>
    </source>
</evidence>
<evidence type="ECO:0000305" key="5"/>
<comment type="cofactor">
    <cofactor evidence="1">
        <name>a divalent metal cation</name>
        <dbReference type="ChEBI" id="CHEBI:60240"/>
    </cofactor>
    <text evidence="1">Binds 1 divalent metal cation per subunit.</text>
</comment>
<comment type="subcellular location">
    <subcellularLocation>
        <location evidence="5">Cell membrane</location>
        <topology evidence="5">Single-pass membrane protein</topology>
    </subcellularLocation>
</comment>
<comment type="induction">
    <text evidence="3 4">In the absence of AI-2, repressed by LsrR. Induced by AI-2, via release of the LsrR repressor.</text>
</comment>
<comment type="similarity">
    <text evidence="5">Belongs to the ribulose-phosphate 3-epimerase family.</text>
</comment>
<organism>
    <name type="scientific">Salmonella typhimurium (strain LT2 / SGSC1412 / ATCC 700720)</name>
    <dbReference type="NCBI Taxonomy" id="99287"/>
    <lineage>
        <taxon>Bacteria</taxon>
        <taxon>Pseudomonadati</taxon>
        <taxon>Pseudomonadota</taxon>
        <taxon>Gammaproteobacteria</taxon>
        <taxon>Enterobacterales</taxon>
        <taxon>Enterobacteriaceae</taxon>
        <taxon>Salmonella</taxon>
    </lineage>
</organism>
<gene>
    <name type="primary">lsrE</name>
    <name type="ordered locus">STM4080</name>
</gene>
<keyword id="KW-1003">Cell membrane</keyword>
<keyword id="KW-0413">Isomerase</keyword>
<keyword id="KW-0472">Membrane</keyword>
<keyword id="KW-0479">Metal-binding</keyword>
<keyword id="KW-1185">Reference proteome</keyword>
<keyword id="KW-0812">Transmembrane</keyword>
<keyword id="KW-1133">Transmembrane helix</keyword>
<reference key="1">
    <citation type="journal article" date="2001" name="Nature">
        <title>Complete genome sequence of Salmonella enterica serovar Typhimurium LT2.</title>
        <authorList>
            <person name="McClelland M."/>
            <person name="Sanderson K.E."/>
            <person name="Spieth J."/>
            <person name="Clifton S.W."/>
            <person name="Latreille P."/>
            <person name="Courtney L."/>
            <person name="Porwollik S."/>
            <person name="Ali J."/>
            <person name="Dante M."/>
            <person name="Du F."/>
            <person name="Hou S."/>
            <person name="Layman D."/>
            <person name="Leonard S."/>
            <person name="Nguyen C."/>
            <person name="Scott K."/>
            <person name="Holmes A."/>
            <person name="Grewal N."/>
            <person name="Mulvaney E."/>
            <person name="Ryan E."/>
            <person name="Sun H."/>
            <person name="Florea L."/>
            <person name="Miller W."/>
            <person name="Stoneking T."/>
            <person name="Nhan M."/>
            <person name="Waterston R."/>
            <person name="Wilson R.K."/>
        </authorList>
    </citation>
    <scope>NUCLEOTIDE SEQUENCE [LARGE SCALE GENOMIC DNA]</scope>
    <source>
        <strain>LT2 / SGSC1412 / ATCC 700720</strain>
    </source>
</reference>
<reference key="2">
    <citation type="journal article" date="2001" name="Mol. Microbiol.">
        <title>The LuxS-dependent autoinducer AI-2 controls the expression of an ABC transporter that functions in AI-2 uptake in Salmonella typhimurium.</title>
        <authorList>
            <person name="Taga M.E."/>
            <person name="Semmelhack J.L."/>
            <person name="Bassler B.L."/>
        </authorList>
    </citation>
    <scope>INDUCTION</scope>
    <source>
        <strain>ATCC 14028 / SGSG 2980 / CDC 6516-60 / NCTC 12023</strain>
    </source>
</reference>
<reference key="3">
    <citation type="journal article" date="2003" name="Mol. Microbiol.">
        <title>Lsr-mediated transport and processing of AI-2 in Salmonella typhimurium.</title>
        <authorList>
            <person name="Taga M.E."/>
            <person name="Miller S.T."/>
            <person name="Bassler B.L."/>
        </authorList>
    </citation>
    <scope>INDUCTION</scope>
    <source>
        <strain>ATCC 14028 / SGSG 2980 / CDC 6516-60 / NCTC 12023</strain>
    </source>
</reference>
<protein>
    <recommendedName>
        <fullName>Putative epimerase LsrE</fullName>
        <ecNumber evidence="1">5.1.3.-</ecNumber>
    </recommendedName>
</protein>
<proteinExistence type="evidence at transcript level"/>